<keyword id="KW-0227">DNA damage</keyword>
<keyword id="KW-0233">DNA recombination</keyword>
<keyword id="KW-0234">DNA repair</keyword>
<keyword id="KW-0479">Metal-binding</keyword>
<keyword id="KW-1185">Reference proteome</keyword>
<keyword id="KW-0862">Zinc</keyword>
<keyword id="KW-0863">Zinc-finger</keyword>
<sequence length="199" mass="22009">MQYPLPIAHLIDAYMKLPGIGEKTATRLAFYTMDMPQEDVEDFSKALIQVKQDIHQCPICGNITEKEICDICSNPNRDQTTIMVVEQPKDLMALEEMGEYDGLYHVLHGVLSPMDGIGPEEVNIKSLITRLQKNDDVKEVILALNSTPEGESTSMYISKLIKPAGIKVTRLAAGLSVGSDIEYANSITLKRAVQGRTTL</sequence>
<feature type="chain" id="PRO_0000190333" description="Recombination protein RecR">
    <location>
        <begin position="1"/>
        <end position="199"/>
    </location>
</feature>
<feature type="domain" description="Toprim" evidence="1">
    <location>
        <begin position="80"/>
        <end position="176"/>
    </location>
</feature>
<feature type="zinc finger region" description="C4-type" evidence="1">
    <location>
        <begin position="57"/>
        <end position="72"/>
    </location>
</feature>
<accession>Q5FM04</accession>
<comment type="function">
    <text evidence="1">May play a role in DNA repair. It seems to be involved in an RecBC-independent recombinational process of DNA repair. It may act with RecF and RecO.</text>
</comment>
<comment type="similarity">
    <text evidence="1">Belongs to the RecR family.</text>
</comment>
<proteinExistence type="inferred from homology"/>
<organism>
    <name type="scientific">Lactobacillus acidophilus (strain ATCC 700396 / NCK56 / N2 / NCFM)</name>
    <dbReference type="NCBI Taxonomy" id="272621"/>
    <lineage>
        <taxon>Bacteria</taxon>
        <taxon>Bacillati</taxon>
        <taxon>Bacillota</taxon>
        <taxon>Bacilli</taxon>
        <taxon>Lactobacillales</taxon>
        <taxon>Lactobacillaceae</taxon>
        <taxon>Lactobacillus</taxon>
    </lineage>
</organism>
<reference key="1">
    <citation type="journal article" date="2005" name="Proc. Natl. Acad. Sci. U.S.A.">
        <title>Complete genome sequence of the probiotic lactic acid bacterium Lactobacillus acidophilus NCFM.</title>
        <authorList>
            <person name="Altermann E."/>
            <person name="Russell W.M."/>
            <person name="Azcarate-Peril M.A."/>
            <person name="Barrangou R."/>
            <person name="Buck B.L."/>
            <person name="McAuliffe O."/>
            <person name="Souther N."/>
            <person name="Dobson A."/>
            <person name="Duong T."/>
            <person name="Callanan M."/>
            <person name="Lick S."/>
            <person name="Hamrick A."/>
            <person name="Cano R."/>
            <person name="Klaenhammer T.R."/>
        </authorList>
    </citation>
    <scope>NUCLEOTIDE SEQUENCE [LARGE SCALE GENOMIC DNA]</scope>
    <source>
        <strain>ATCC 700396 / NCK56 / N2 / NCFM</strain>
    </source>
</reference>
<protein>
    <recommendedName>
        <fullName evidence="1">Recombination protein RecR</fullName>
    </recommendedName>
</protein>
<name>RECR_LACAC</name>
<dbReference type="EMBL" id="CP000033">
    <property type="protein sequence ID" value="AAV42270.1"/>
    <property type="molecule type" value="Genomic_DNA"/>
</dbReference>
<dbReference type="RefSeq" id="WP_003549113.1">
    <property type="nucleotide sequence ID" value="NC_006814.3"/>
</dbReference>
<dbReference type="RefSeq" id="YP_193301.1">
    <property type="nucleotide sequence ID" value="NC_006814.3"/>
</dbReference>
<dbReference type="SMR" id="Q5FM04"/>
<dbReference type="STRING" id="272621.LBA0379"/>
<dbReference type="GeneID" id="93290521"/>
<dbReference type="KEGG" id="lac:LBA0379"/>
<dbReference type="PATRIC" id="fig|272621.13.peg.365"/>
<dbReference type="eggNOG" id="COG0353">
    <property type="taxonomic scope" value="Bacteria"/>
</dbReference>
<dbReference type="HOGENOM" id="CLU_060739_1_0_9"/>
<dbReference type="OrthoDB" id="9802672at2"/>
<dbReference type="BioCyc" id="LACI272621:G1G49-373-MONOMER"/>
<dbReference type="Proteomes" id="UP000006381">
    <property type="component" value="Chromosome"/>
</dbReference>
<dbReference type="GO" id="GO:0003677">
    <property type="term" value="F:DNA binding"/>
    <property type="evidence" value="ECO:0007669"/>
    <property type="project" value="UniProtKB-UniRule"/>
</dbReference>
<dbReference type="GO" id="GO:0008270">
    <property type="term" value="F:zinc ion binding"/>
    <property type="evidence" value="ECO:0007669"/>
    <property type="project" value="UniProtKB-KW"/>
</dbReference>
<dbReference type="GO" id="GO:0006310">
    <property type="term" value="P:DNA recombination"/>
    <property type="evidence" value="ECO:0007669"/>
    <property type="project" value="UniProtKB-UniRule"/>
</dbReference>
<dbReference type="GO" id="GO:0006281">
    <property type="term" value="P:DNA repair"/>
    <property type="evidence" value="ECO:0007669"/>
    <property type="project" value="UniProtKB-UniRule"/>
</dbReference>
<dbReference type="CDD" id="cd01025">
    <property type="entry name" value="TOPRIM_recR"/>
    <property type="match status" value="1"/>
</dbReference>
<dbReference type="Gene3D" id="3.30.60.80">
    <property type="match status" value="1"/>
</dbReference>
<dbReference type="Gene3D" id="3.40.1360.10">
    <property type="match status" value="1"/>
</dbReference>
<dbReference type="Gene3D" id="6.10.250.240">
    <property type="match status" value="1"/>
</dbReference>
<dbReference type="Gene3D" id="1.10.8.420">
    <property type="entry name" value="RecR Domain 1"/>
    <property type="match status" value="1"/>
</dbReference>
<dbReference type="HAMAP" id="MF_00017">
    <property type="entry name" value="RecR"/>
    <property type="match status" value="1"/>
</dbReference>
<dbReference type="InterPro" id="IPR000093">
    <property type="entry name" value="DNA_Rcmb_RecR"/>
</dbReference>
<dbReference type="InterPro" id="IPR023627">
    <property type="entry name" value="Rcmb_RecR"/>
</dbReference>
<dbReference type="InterPro" id="IPR015967">
    <property type="entry name" value="Rcmb_RecR_Znf"/>
</dbReference>
<dbReference type="InterPro" id="IPR006171">
    <property type="entry name" value="TOPRIM_dom"/>
</dbReference>
<dbReference type="InterPro" id="IPR034137">
    <property type="entry name" value="TOPRIM_RecR"/>
</dbReference>
<dbReference type="NCBIfam" id="TIGR00615">
    <property type="entry name" value="recR"/>
    <property type="match status" value="1"/>
</dbReference>
<dbReference type="PANTHER" id="PTHR30446">
    <property type="entry name" value="RECOMBINATION PROTEIN RECR"/>
    <property type="match status" value="1"/>
</dbReference>
<dbReference type="PANTHER" id="PTHR30446:SF0">
    <property type="entry name" value="RECOMBINATION PROTEIN RECR"/>
    <property type="match status" value="1"/>
</dbReference>
<dbReference type="Pfam" id="PF21175">
    <property type="entry name" value="RecR_C"/>
    <property type="match status" value="1"/>
</dbReference>
<dbReference type="Pfam" id="PF21176">
    <property type="entry name" value="RecR_HhH"/>
    <property type="match status" value="1"/>
</dbReference>
<dbReference type="Pfam" id="PF02132">
    <property type="entry name" value="RecR_ZnF"/>
    <property type="match status" value="1"/>
</dbReference>
<dbReference type="Pfam" id="PF13662">
    <property type="entry name" value="Toprim_4"/>
    <property type="match status" value="1"/>
</dbReference>
<dbReference type="SMART" id="SM00493">
    <property type="entry name" value="TOPRIM"/>
    <property type="match status" value="1"/>
</dbReference>
<dbReference type="SUPFAM" id="SSF111304">
    <property type="entry name" value="Recombination protein RecR"/>
    <property type="match status" value="1"/>
</dbReference>
<dbReference type="PROSITE" id="PS01300">
    <property type="entry name" value="RECR"/>
    <property type="match status" value="1"/>
</dbReference>
<dbReference type="PROSITE" id="PS50880">
    <property type="entry name" value="TOPRIM"/>
    <property type="match status" value="1"/>
</dbReference>
<gene>
    <name evidence="1" type="primary">recR</name>
    <name type="ordered locus">LBA0379</name>
</gene>
<evidence type="ECO:0000255" key="1">
    <source>
        <dbReference type="HAMAP-Rule" id="MF_00017"/>
    </source>
</evidence>